<gene>
    <name type="primary">walR</name>
    <name type="synonym">vicR</name>
    <name type="ordered locus">MW0018</name>
</gene>
<evidence type="ECO:0000250" key="1">
    <source>
        <dbReference type="UniProtKB" id="Q2G2U6"/>
    </source>
</evidence>
<evidence type="ECO:0000250" key="2">
    <source>
        <dbReference type="UniProtKB" id="Q7A8E1"/>
    </source>
</evidence>
<evidence type="ECO:0000250" key="3">
    <source>
        <dbReference type="UniProtKB" id="Q9RDT5"/>
    </source>
</evidence>
<evidence type="ECO:0000255" key="4">
    <source>
        <dbReference type="PROSITE-ProRule" id="PRU00169"/>
    </source>
</evidence>
<evidence type="ECO:0000255" key="5">
    <source>
        <dbReference type="PROSITE-ProRule" id="PRU01091"/>
    </source>
</evidence>
<evidence type="ECO:0000305" key="6"/>
<proteinExistence type="inferred from homology"/>
<sequence length="233" mass="27192">MARKVVVVDDEKPIADILEFNLKKEGYDVYCAYDGNDAVDLIYEEEPDIVLLDIMLPGRDGMEVCREVRKKYEMPIIMLTAKDSEIDKVLGLELGADDYVTKPFSTRELIARVKANLRRHYSQPAQDTGNVTNEITIKDIVIYPDAYSIKKRGEDIELTHREFELFHYLSKHMGQVMTREHLLQTVWGYDYFGDVRTVDVTIRRLREKIEDDPSHPEYIVTRRGVGYFLQQHE</sequence>
<organism>
    <name type="scientific">Staphylococcus aureus (strain MW2)</name>
    <dbReference type="NCBI Taxonomy" id="196620"/>
    <lineage>
        <taxon>Bacteria</taxon>
        <taxon>Bacillati</taxon>
        <taxon>Bacillota</taxon>
        <taxon>Bacilli</taxon>
        <taxon>Bacillales</taxon>
        <taxon>Staphylococcaceae</taxon>
        <taxon>Staphylococcus</taxon>
    </lineage>
</organism>
<keyword id="KW-0010">Activator</keyword>
<keyword id="KW-0963">Cytoplasm</keyword>
<keyword id="KW-0238">DNA-binding</keyword>
<keyword id="KW-0597">Phosphoprotein</keyword>
<keyword id="KW-0804">Transcription</keyword>
<keyword id="KW-0805">Transcription regulation</keyword>
<keyword id="KW-0902">Two-component regulatory system</keyword>
<comment type="function">
    <text evidence="1 3">Member of the two-component regulatory system WalK/WalR that regulates genes involved in cell wall metabolism, virulence regulation, biofilm production, oxidative stress resistance and antibiotic resistance via direct or indirect regulation of autolysins (By similarity). Functions as a transcription regulator by direct binding to promoter regions (By similarity).</text>
</comment>
<comment type="subcellular location">
    <subcellularLocation>
        <location evidence="6">Cytoplasm</location>
    </subcellularLocation>
</comment>
<comment type="PTM">
    <text evidence="2 3">Phosphorylated by WalK on Asp-53 (By similarity). Phosphorylated by PknB on Thr-101 (By similarity).</text>
</comment>
<accession>Q7A216</accession>
<name>WALR_STAAW</name>
<feature type="chain" id="PRO_0000353040" description="Transcriptional regulatory protein WalR">
    <location>
        <begin position="1"/>
        <end position="233"/>
    </location>
</feature>
<feature type="domain" description="Response regulatory" evidence="4">
    <location>
        <begin position="4"/>
        <end position="117"/>
    </location>
</feature>
<feature type="DNA-binding region" description="OmpR/PhoB-type" evidence="5">
    <location>
        <begin position="132"/>
        <end position="231"/>
    </location>
</feature>
<feature type="modified residue" description="4-aspartylphosphate" evidence="4">
    <location>
        <position position="53"/>
    </location>
</feature>
<feature type="modified residue" description="Phosphothreonine" evidence="2">
    <location>
        <position position="101"/>
    </location>
</feature>
<dbReference type="EMBL" id="BA000033">
    <property type="protein sequence ID" value="BAB93883.1"/>
    <property type="molecule type" value="Genomic_DNA"/>
</dbReference>
<dbReference type="SMR" id="Q7A216"/>
<dbReference type="KEGG" id="sam:MW0018"/>
<dbReference type="HOGENOM" id="CLU_000445_30_4_9"/>
<dbReference type="GO" id="GO:0005829">
    <property type="term" value="C:cytosol"/>
    <property type="evidence" value="ECO:0007669"/>
    <property type="project" value="TreeGrafter"/>
</dbReference>
<dbReference type="GO" id="GO:0032993">
    <property type="term" value="C:protein-DNA complex"/>
    <property type="evidence" value="ECO:0007669"/>
    <property type="project" value="TreeGrafter"/>
</dbReference>
<dbReference type="GO" id="GO:0000156">
    <property type="term" value="F:phosphorelay response regulator activity"/>
    <property type="evidence" value="ECO:0007669"/>
    <property type="project" value="TreeGrafter"/>
</dbReference>
<dbReference type="GO" id="GO:0000976">
    <property type="term" value="F:transcription cis-regulatory region binding"/>
    <property type="evidence" value="ECO:0007669"/>
    <property type="project" value="TreeGrafter"/>
</dbReference>
<dbReference type="GO" id="GO:0006355">
    <property type="term" value="P:regulation of DNA-templated transcription"/>
    <property type="evidence" value="ECO:0007669"/>
    <property type="project" value="InterPro"/>
</dbReference>
<dbReference type="CDD" id="cd17614">
    <property type="entry name" value="REC_OmpR_YycF-like"/>
    <property type="match status" value="1"/>
</dbReference>
<dbReference type="CDD" id="cd00383">
    <property type="entry name" value="trans_reg_C"/>
    <property type="match status" value="1"/>
</dbReference>
<dbReference type="FunFam" id="1.10.10.10:FF:000089">
    <property type="entry name" value="Alkaline phosphatase synthesis response regulator"/>
    <property type="match status" value="1"/>
</dbReference>
<dbReference type="FunFam" id="3.40.50.2300:FF:000052">
    <property type="entry name" value="DNA-binding response regulator YycF"/>
    <property type="match status" value="1"/>
</dbReference>
<dbReference type="Gene3D" id="3.40.50.2300">
    <property type="match status" value="1"/>
</dbReference>
<dbReference type="Gene3D" id="6.10.250.690">
    <property type="match status" value="1"/>
</dbReference>
<dbReference type="Gene3D" id="1.10.10.10">
    <property type="entry name" value="Winged helix-like DNA-binding domain superfamily/Winged helix DNA-binding domain"/>
    <property type="match status" value="1"/>
</dbReference>
<dbReference type="InterPro" id="IPR011006">
    <property type="entry name" value="CheY-like_superfamily"/>
</dbReference>
<dbReference type="InterPro" id="IPR001867">
    <property type="entry name" value="OmpR/PhoB-type_DNA-bd"/>
</dbReference>
<dbReference type="InterPro" id="IPR047791">
    <property type="entry name" value="Resp_reg_WalR"/>
</dbReference>
<dbReference type="InterPro" id="IPR016032">
    <property type="entry name" value="Sig_transdc_resp-reg_C-effctor"/>
</dbReference>
<dbReference type="InterPro" id="IPR001789">
    <property type="entry name" value="Sig_transdc_resp-reg_receiver"/>
</dbReference>
<dbReference type="InterPro" id="IPR039420">
    <property type="entry name" value="WalR-like"/>
</dbReference>
<dbReference type="InterPro" id="IPR036388">
    <property type="entry name" value="WH-like_DNA-bd_sf"/>
</dbReference>
<dbReference type="NCBIfam" id="NF040534">
    <property type="entry name" value="resp_reg_YycF"/>
    <property type="match status" value="1"/>
</dbReference>
<dbReference type="PANTHER" id="PTHR48111:SF40">
    <property type="entry name" value="PHOSPHATE REGULON TRANSCRIPTIONAL REGULATORY PROTEIN PHOB"/>
    <property type="match status" value="1"/>
</dbReference>
<dbReference type="PANTHER" id="PTHR48111">
    <property type="entry name" value="REGULATOR OF RPOS"/>
    <property type="match status" value="1"/>
</dbReference>
<dbReference type="Pfam" id="PF00072">
    <property type="entry name" value="Response_reg"/>
    <property type="match status" value="1"/>
</dbReference>
<dbReference type="Pfam" id="PF00486">
    <property type="entry name" value="Trans_reg_C"/>
    <property type="match status" value="1"/>
</dbReference>
<dbReference type="SMART" id="SM00448">
    <property type="entry name" value="REC"/>
    <property type="match status" value="1"/>
</dbReference>
<dbReference type="SMART" id="SM00862">
    <property type="entry name" value="Trans_reg_C"/>
    <property type="match status" value="1"/>
</dbReference>
<dbReference type="SUPFAM" id="SSF46894">
    <property type="entry name" value="C-terminal effector domain of the bipartite response regulators"/>
    <property type="match status" value="1"/>
</dbReference>
<dbReference type="SUPFAM" id="SSF52172">
    <property type="entry name" value="CheY-like"/>
    <property type="match status" value="1"/>
</dbReference>
<dbReference type="PROSITE" id="PS51755">
    <property type="entry name" value="OMPR_PHOB"/>
    <property type="match status" value="1"/>
</dbReference>
<dbReference type="PROSITE" id="PS50110">
    <property type="entry name" value="RESPONSE_REGULATORY"/>
    <property type="match status" value="1"/>
</dbReference>
<reference key="1">
    <citation type="journal article" date="2002" name="Lancet">
        <title>Genome and virulence determinants of high virulence community-acquired MRSA.</title>
        <authorList>
            <person name="Baba T."/>
            <person name="Takeuchi F."/>
            <person name="Kuroda M."/>
            <person name="Yuzawa H."/>
            <person name="Aoki K."/>
            <person name="Oguchi A."/>
            <person name="Nagai Y."/>
            <person name="Iwama N."/>
            <person name="Asano K."/>
            <person name="Naimi T."/>
            <person name="Kuroda H."/>
            <person name="Cui L."/>
            <person name="Yamamoto K."/>
            <person name="Hiramatsu K."/>
        </authorList>
    </citation>
    <scope>NUCLEOTIDE SEQUENCE [LARGE SCALE GENOMIC DNA]</scope>
    <source>
        <strain>MW2</strain>
    </source>
</reference>
<protein>
    <recommendedName>
        <fullName evidence="6">Transcriptional regulatory protein WalR</fullName>
    </recommendedName>
</protein>